<organism>
    <name type="scientific">Chlorobium luteolum (strain DSM 273 / BCRC 81028 / 2530)</name>
    <name type="common">Pelodictyon luteolum</name>
    <dbReference type="NCBI Taxonomy" id="319225"/>
    <lineage>
        <taxon>Bacteria</taxon>
        <taxon>Pseudomonadati</taxon>
        <taxon>Chlorobiota</taxon>
        <taxon>Chlorobiia</taxon>
        <taxon>Chlorobiales</taxon>
        <taxon>Chlorobiaceae</taxon>
        <taxon>Chlorobium/Pelodictyon group</taxon>
        <taxon>Pelodictyon</taxon>
    </lineage>
</organism>
<gene>
    <name evidence="1" type="primary">nadK</name>
    <name type="ordered locus">Plut_2050</name>
</gene>
<proteinExistence type="inferred from homology"/>
<dbReference type="EC" id="2.7.1.23" evidence="1"/>
<dbReference type="EMBL" id="CP000096">
    <property type="protein sequence ID" value="ABB24892.1"/>
    <property type="molecule type" value="Genomic_DNA"/>
</dbReference>
<dbReference type="RefSeq" id="WP_011358762.1">
    <property type="nucleotide sequence ID" value="NC_007512.1"/>
</dbReference>
<dbReference type="SMR" id="Q3B189"/>
<dbReference type="STRING" id="319225.Plut_2050"/>
<dbReference type="KEGG" id="plt:Plut_2050"/>
<dbReference type="eggNOG" id="COG0061">
    <property type="taxonomic scope" value="Bacteria"/>
</dbReference>
<dbReference type="HOGENOM" id="CLU_008831_0_1_10"/>
<dbReference type="OrthoDB" id="9774737at2"/>
<dbReference type="Proteomes" id="UP000002709">
    <property type="component" value="Chromosome"/>
</dbReference>
<dbReference type="GO" id="GO:0005737">
    <property type="term" value="C:cytoplasm"/>
    <property type="evidence" value="ECO:0007669"/>
    <property type="project" value="UniProtKB-SubCell"/>
</dbReference>
<dbReference type="GO" id="GO:0005524">
    <property type="term" value="F:ATP binding"/>
    <property type="evidence" value="ECO:0007669"/>
    <property type="project" value="UniProtKB-KW"/>
</dbReference>
<dbReference type="GO" id="GO:0046872">
    <property type="term" value="F:metal ion binding"/>
    <property type="evidence" value="ECO:0007669"/>
    <property type="project" value="UniProtKB-UniRule"/>
</dbReference>
<dbReference type="GO" id="GO:0051287">
    <property type="term" value="F:NAD binding"/>
    <property type="evidence" value="ECO:0007669"/>
    <property type="project" value="UniProtKB-ARBA"/>
</dbReference>
<dbReference type="GO" id="GO:0003951">
    <property type="term" value="F:NAD+ kinase activity"/>
    <property type="evidence" value="ECO:0007669"/>
    <property type="project" value="UniProtKB-UniRule"/>
</dbReference>
<dbReference type="GO" id="GO:0019674">
    <property type="term" value="P:NAD metabolic process"/>
    <property type="evidence" value="ECO:0007669"/>
    <property type="project" value="InterPro"/>
</dbReference>
<dbReference type="GO" id="GO:0006741">
    <property type="term" value="P:NADP biosynthetic process"/>
    <property type="evidence" value="ECO:0007669"/>
    <property type="project" value="UniProtKB-UniRule"/>
</dbReference>
<dbReference type="Gene3D" id="3.40.50.10330">
    <property type="entry name" value="Probable inorganic polyphosphate/atp-NAD kinase, domain 1"/>
    <property type="match status" value="1"/>
</dbReference>
<dbReference type="Gene3D" id="2.60.200.30">
    <property type="entry name" value="Probable inorganic polyphosphate/atp-NAD kinase, domain 2"/>
    <property type="match status" value="1"/>
</dbReference>
<dbReference type="HAMAP" id="MF_00361">
    <property type="entry name" value="NAD_kinase"/>
    <property type="match status" value="1"/>
</dbReference>
<dbReference type="InterPro" id="IPR017438">
    <property type="entry name" value="ATP-NAD_kinase_N"/>
</dbReference>
<dbReference type="InterPro" id="IPR017437">
    <property type="entry name" value="ATP-NAD_kinase_PpnK-typ_C"/>
</dbReference>
<dbReference type="InterPro" id="IPR016064">
    <property type="entry name" value="NAD/diacylglycerol_kinase_sf"/>
</dbReference>
<dbReference type="InterPro" id="IPR002504">
    <property type="entry name" value="NADK"/>
</dbReference>
<dbReference type="PANTHER" id="PTHR20275">
    <property type="entry name" value="NAD KINASE"/>
    <property type="match status" value="1"/>
</dbReference>
<dbReference type="PANTHER" id="PTHR20275:SF0">
    <property type="entry name" value="NAD KINASE"/>
    <property type="match status" value="1"/>
</dbReference>
<dbReference type="Pfam" id="PF01513">
    <property type="entry name" value="NAD_kinase"/>
    <property type="match status" value="1"/>
</dbReference>
<dbReference type="Pfam" id="PF20143">
    <property type="entry name" value="NAD_kinase_C"/>
    <property type="match status" value="1"/>
</dbReference>
<dbReference type="SUPFAM" id="SSF111331">
    <property type="entry name" value="NAD kinase/diacylglycerol kinase-like"/>
    <property type="match status" value="1"/>
</dbReference>
<accession>Q3B189</accession>
<sequence>MKFGIVINVSRERALELARKLVSWLEAQGIGYIFETLSAERIGSALSAPIEELNTQCDAFISLGGDGTLLFTSQHSVTKPVVGINVGYLGFLTEFTQEEMFDAVEKVIKGTYTIHTRTQLEASVPADGRNEQFLALNDVVIEKGTYPRIPAFVIKLDGELLSSYRADGIIIATSTGSTAYSMSAGGPIIAPKSSVFVITPICPHMLTVRPIVISDEKIIEISVEAPDGEFPLNCDGHLRRMLEPMERVTVRKSIRLINLVANENRDYCEVLRTKLLWGREHNSGL</sequence>
<protein>
    <recommendedName>
        <fullName evidence="1">NAD kinase</fullName>
        <ecNumber evidence="1">2.7.1.23</ecNumber>
    </recommendedName>
    <alternativeName>
        <fullName evidence="1">ATP-dependent NAD kinase</fullName>
    </alternativeName>
</protein>
<reference key="1">
    <citation type="submission" date="2005-08" db="EMBL/GenBank/DDBJ databases">
        <title>Complete sequence of Pelodictyon luteolum DSM 273.</title>
        <authorList>
            <consortium name="US DOE Joint Genome Institute"/>
            <person name="Copeland A."/>
            <person name="Lucas S."/>
            <person name="Lapidus A."/>
            <person name="Barry K."/>
            <person name="Detter J.C."/>
            <person name="Glavina T."/>
            <person name="Hammon N."/>
            <person name="Israni S."/>
            <person name="Pitluck S."/>
            <person name="Bryant D."/>
            <person name="Schmutz J."/>
            <person name="Larimer F."/>
            <person name="Land M."/>
            <person name="Kyrpides N."/>
            <person name="Ivanova N."/>
            <person name="Richardson P."/>
        </authorList>
    </citation>
    <scope>NUCLEOTIDE SEQUENCE [LARGE SCALE GENOMIC DNA]</scope>
    <source>
        <strain>DSM 273 / BCRC 81028 / 2530</strain>
    </source>
</reference>
<keyword id="KW-0067">ATP-binding</keyword>
<keyword id="KW-0963">Cytoplasm</keyword>
<keyword id="KW-0418">Kinase</keyword>
<keyword id="KW-0520">NAD</keyword>
<keyword id="KW-0521">NADP</keyword>
<keyword id="KW-0547">Nucleotide-binding</keyword>
<keyword id="KW-1185">Reference proteome</keyword>
<keyword id="KW-0808">Transferase</keyword>
<name>NADK_CHLL3</name>
<feature type="chain" id="PRO_0000229663" description="NAD kinase">
    <location>
        <begin position="1"/>
        <end position="285"/>
    </location>
</feature>
<feature type="active site" description="Proton acceptor" evidence="1">
    <location>
        <position position="66"/>
    </location>
</feature>
<feature type="binding site" evidence="1">
    <location>
        <begin position="66"/>
        <end position="67"/>
    </location>
    <ligand>
        <name>NAD(+)</name>
        <dbReference type="ChEBI" id="CHEBI:57540"/>
    </ligand>
</feature>
<feature type="binding site" evidence="1">
    <location>
        <begin position="137"/>
        <end position="138"/>
    </location>
    <ligand>
        <name>NAD(+)</name>
        <dbReference type="ChEBI" id="CHEBI:57540"/>
    </ligand>
</feature>
<feature type="binding site" evidence="1">
    <location>
        <position position="148"/>
    </location>
    <ligand>
        <name>NAD(+)</name>
        <dbReference type="ChEBI" id="CHEBI:57540"/>
    </ligand>
</feature>
<feature type="binding site" evidence="1">
    <location>
        <position position="165"/>
    </location>
    <ligand>
        <name>NAD(+)</name>
        <dbReference type="ChEBI" id="CHEBI:57540"/>
    </ligand>
</feature>
<feature type="binding site" evidence="1">
    <location>
        <position position="167"/>
    </location>
    <ligand>
        <name>NAD(+)</name>
        <dbReference type="ChEBI" id="CHEBI:57540"/>
    </ligand>
</feature>
<feature type="binding site" evidence="1">
    <location>
        <begin position="178"/>
        <end position="183"/>
    </location>
    <ligand>
        <name>NAD(+)</name>
        <dbReference type="ChEBI" id="CHEBI:57540"/>
    </ligand>
</feature>
<evidence type="ECO:0000255" key="1">
    <source>
        <dbReference type="HAMAP-Rule" id="MF_00361"/>
    </source>
</evidence>
<comment type="function">
    <text evidence="1">Involved in the regulation of the intracellular balance of NAD and NADP, and is a key enzyme in the biosynthesis of NADP. Catalyzes specifically the phosphorylation on 2'-hydroxyl of the adenosine moiety of NAD to yield NADP.</text>
</comment>
<comment type="catalytic activity">
    <reaction evidence="1">
        <text>NAD(+) + ATP = ADP + NADP(+) + H(+)</text>
        <dbReference type="Rhea" id="RHEA:18629"/>
        <dbReference type="ChEBI" id="CHEBI:15378"/>
        <dbReference type="ChEBI" id="CHEBI:30616"/>
        <dbReference type="ChEBI" id="CHEBI:57540"/>
        <dbReference type="ChEBI" id="CHEBI:58349"/>
        <dbReference type="ChEBI" id="CHEBI:456216"/>
        <dbReference type="EC" id="2.7.1.23"/>
    </reaction>
</comment>
<comment type="cofactor">
    <cofactor evidence="1">
        <name>a divalent metal cation</name>
        <dbReference type="ChEBI" id="CHEBI:60240"/>
    </cofactor>
</comment>
<comment type="subcellular location">
    <subcellularLocation>
        <location evidence="1">Cytoplasm</location>
    </subcellularLocation>
</comment>
<comment type="similarity">
    <text evidence="1">Belongs to the NAD kinase family.</text>
</comment>